<proteinExistence type="evidence at protein level"/>
<feature type="chain" id="PRO_0000077438" description="Carbonic anhydrase-related protein 10">
    <location>
        <begin position="1"/>
        <end position="328"/>
    </location>
</feature>
<feature type="domain" description="Alpha-carbonic anhydrase" evidence="1">
    <location>
        <begin position="31"/>
        <end position="301"/>
    </location>
</feature>
<evidence type="ECO:0000255" key="1">
    <source>
        <dbReference type="PROSITE-ProRule" id="PRU01134"/>
    </source>
</evidence>
<evidence type="ECO:0000305" key="2"/>
<name>CAH10_MOUSE</name>
<comment type="function">
    <text>Does not have a catalytic activity.</text>
</comment>
<comment type="similarity">
    <text evidence="2">Belongs to the alpha-carbonic anhydrase family.</text>
</comment>
<dbReference type="EMBL" id="AB080741">
    <property type="protein sequence ID" value="BAC11853.1"/>
    <property type="molecule type" value="mRNA"/>
</dbReference>
<dbReference type="EMBL" id="BC017606">
    <property type="protein sequence ID" value="AAH17606.1"/>
    <property type="molecule type" value="mRNA"/>
</dbReference>
<dbReference type="CCDS" id="CCDS25244.1"/>
<dbReference type="RefSeq" id="NP_082572.1">
    <property type="nucleotide sequence ID" value="NM_028296.3"/>
</dbReference>
<dbReference type="RefSeq" id="XP_006534382.1">
    <property type="nucleotide sequence ID" value="XM_006534319.3"/>
</dbReference>
<dbReference type="RefSeq" id="XP_017170284.1">
    <property type="nucleotide sequence ID" value="XM_017314795.1"/>
</dbReference>
<dbReference type="SMR" id="P61215"/>
<dbReference type="FunCoup" id="P61215">
    <property type="interactions" value="19"/>
</dbReference>
<dbReference type="STRING" id="10090.ENSMUSP00000103495"/>
<dbReference type="GlyConnect" id="2182">
    <property type="glycosylation" value="3 N-Linked glycans (2 sites)"/>
</dbReference>
<dbReference type="GlyCosmos" id="P61215">
    <property type="glycosylation" value="2 sites, 3 glycans"/>
</dbReference>
<dbReference type="GlyGen" id="P61215">
    <property type="glycosylation" value="4 sites, 6 N-linked glycans (3 sites), 1 O-linked glycan (1 site)"/>
</dbReference>
<dbReference type="iPTMnet" id="P61215"/>
<dbReference type="PhosphoSitePlus" id="P61215"/>
<dbReference type="jPOST" id="P61215"/>
<dbReference type="PaxDb" id="10090-ENSMUSP00000103495"/>
<dbReference type="ProteomicsDB" id="281755"/>
<dbReference type="Antibodypedia" id="30804">
    <property type="antibodies" value="193 antibodies from 27 providers"/>
</dbReference>
<dbReference type="DNASU" id="72605"/>
<dbReference type="Ensembl" id="ENSMUST00000042943.13">
    <property type="protein sequence ID" value="ENSMUSP00000035585.7"/>
    <property type="gene ID" value="ENSMUSG00000056158.15"/>
</dbReference>
<dbReference type="Ensembl" id="ENSMUST00000107863.4">
    <property type="protein sequence ID" value="ENSMUSP00000103495.3"/>
    <property type="gene ID" value="ENSMUSG00000056158.15"/>
</dbReference>
<dbReference type="GeneID" id="72605"/>
<dbReference type="KEGG" id="mmu:72605"/>
<dbReference type="UCSC" id="uc007kxi.2">
    <property type="organism name" value="mouse"/>
</dbReference>
<dbReference type="AGR" id="MGI:1919855"/>
<dbReference type="CTD" id="72605"/>
<dbReference type="MGI" id="MGI:1919855">
    <property type="gene designation" value="Car10"/>
</dbReference>
<dbReference type="VEuPathDB" id="HostDB:ENSMUSG00000056158"/>
<dbReference type="eggNOG" id="KOG0382">
    <property type="taxonomic scope" value="Eukaryota"/>
</dbReference>
<dbReference type="GeneTree" id="ENSGT00940000155223"/>
<dbReference type="HOGENOM" id="CLU_039326_7_1_1"/>
<dbReference type="InParanoid" id="P61215"/>
<dbReference type="OMA" id="MYYQANT"/>
<dbReference type="OrthoDB" id="5978072at2759"/>
<dbReference type="PhylomeDB" id="P61215"/>
<dbReference type="TreeFam" id="TF352926"/>
<dbReference type="BioGRID-ORCS" id="72605">
    <property type="hits" value="5 hits in 78 CRISPR screens"/>
</dbReference>
<dbReference type="ChiTaRS" id="Car10">
    <property type="organism name" value="mouse"/>
</dbReference>
<dbReference type="PRO" id="PR:P61215"/>
<dbReference type="Proteomes" id="UP000000589">
    <property type="component" value="Chromosome 11"/>
</dbReference>
<dbReference type="RNAct" id="P61215">
    <property type="molecule type" value="protein"/>
</dbReference>
<dbReference type="Bgee" id="ENSMUSG00000056158">
    <property type="expression patterns" value="Expressed in cerebellum lobe and 115 other cell types or tissues"/>
</dbReference>
<dbReference type="ExpressionAtlas" id="P61215">
    <property type="expression patterns" value="baseline and differential"/>
</dbReference>
<dbReference type="GO" id="GO:0004089">
    <property type="term" value="F:carbonate dehydratase activity"/>
    <property type="evidence" value="ECO:0007669"/>
    <property type="project" value="InterPro"/>
</dbReference>
<dbReference type="GO" id="GO:0008270">
    <property type="term" value="F:zinc ion binding"/>
    <property type="evidence" value="ECO:0007669"/>
    <property type="project" value="InterPro"/>
</dbReference>
<dbReference type="CDD" id="cd03121">
    <property type="entry name" value="alpha_CARP_X_XI_like"/>
    <property type="match status" value="1"/>
</dbReference>
<dbReference type="FunFam" id="3.10.200.10:FF:000002">
    <property type="entry name" value="Carbonic anhydrase-related protein 10"/>
    <property type="match status" value="1"/>
</dbReference>
<dbReference type="Gene3D" id="3.10.200.10">
    <property type="entry name" value="Alpha carbonic anhydrase"/>
    <property type="match status" value="1"/>
</dbReference>
<dbReference type="InterPro" id="IPR041878">
    <property type="entry name" value="Alpha_CARP_X/XI"/>
</dbReference>
<dbReference type="InterPro" id="IPR001148">
    <property type="entry name" value="CA_dom"/>
</dbReference>
<dbReference type="InterPro" id="IPR036398">
    <property type="entry name" value="CA_dom_sf"/>
</dbReference>
<dbReference type="InterPro" id="IPR023561">
    <property type="entry name" value="Carbonic_anhydrase_a-class"/>
</dbReference>
<dbReference type="PANTHER" id="PTHR18952">
    <property type="entry name" value="CARBONIC ANHYDRASE"/>
    <property type="match status" value="1"/>
</dbReference>
<dbReference type="PANTHER" id="PTHR18952:SF91">
    <property type="entry name" value="CARBONIC ANHYDRASE-RELATED PROTEIN 10"/>
    <property type="match status" value="1"/>
</dbReference>
<dbReference type="Pfam" id="PF00194">
    <property type="entry name" value="Carb_anhydrase"/>
    <property type="match status" value="1"/>
</dbReference>
<dbReference type="SMART" id="SM01057">
    <property type="entry name" value="Carb_anhydrase"/>
    <property type="match status" value="1"/>
</dbReference>
<dbReference type="SUPFAM" id="SSF51069">
    <property type="entry name" value="Carbonic anhydrase"/>
    <property type="match status" value="1"/>
</dbReference>
<dbReference type="PROSITE" id="PS51144">
    <property type="entry name" value="ALPHA_CA_2"/>
    <property type="match status" value="1"/>
</dbReference>
<accession>P61215</accession>
<protein>
    <recommendedName>
        <fullName>Carbonic anhydrase-related protein 10</fullName>
    </recommendedName>
    <alternativeName>
        <fullName>Carbonic anhydrase-related protein X</fullName>
        <shortName>CA-RP X</shortName>
        <shortName>CARP X</shortName>
    </alternativeName>
</protein>
<sequence length="328" mass="37563">MEIVWEVLFLLQANFIVCISAQQNSPKIHEGWWAYKEVVQGSFVPVPSFWGLVNSAWNLCSVGKRQSPVNIETSHMIFDPFLTPLRINTGGRKVSGTMYNTGRHVSLRLDKEHLVNISGGPMTYSHRLEEIRLHFGSEDSQGSEHLLNGQAFSGEVQLIHYNHELYTNVTEAAKSPNGLVVVSIFIKVSDSSNPFLNRMLNRDTITRITYKNDAYLLQGLNIEELYPETSSFITYDGSMTIPPCYETASWIIMNKPVYITRMQMHSLRLLSQNQPSQIFLSMSDNFRPVQPLNNRCIRTNINFSLQGKDCPNNRAQKLQYRVNEWLLK</sequence>
<reference key="1">
    <citation type="submission" date="2002-03" db="EMBL/GenBank/DDBJ databases">
        <title>Divelopmental expression of murine carbonic anhydrase-related protein VIII, X, and XI.</title>
        <authorList>
            <person name="Taniuchi K."/>
            <person name="Nishimori I."/>
        </authorList>
    </citation>
    <scope>NUCLEOTIDE SEQUENCE [MRNA]</scope>
</reference>
<reference key="2">
    <citation type="journal article" date="2004" name="Genome Res.">
        <title>The status, quality, and expansion of the NIH full-length cDNA project: the Mammalian Gene Collection (MGC).</title>
        <authorList>
            <consortium name="The MGC Project Team"/>
        </authorList>
    </citation>
    <scope>NUCLEOTIDE SEQUENCE [LARGE SCALE MRNA]</scope>
    <source>
        <tissue>Eye</tissue>
    </source>
</reference>
<reference key="3">
    <citation type="journal article" date="2010" name="Cell">
        <title>A tissue-specific atlas of mouse protein phosphorylation and expression.</title>
        <authorList>
            <person name="Huttlin E.L."/>
            <person name="Jedrychowski M.P."/>
            <person name="Elias J.E."/>
            <person name="Goswami T."/>
            <person name="Rad R."/>
            <person name="Beausoleil S.A."/>
            <person name="Villen J."/>
            <person name="Haas W."/>
            <person name="Sowa M.E."/>
            <person name="Gygi S.P."/>
        </authorList>
    </citation>
    <scope>IDENTIFICATION BY MASS SPECTROMETRY [LARGE SCALE ANALYSIS]</scope>
    <source>
        <tissue>Brain</tissue>
    </source>
</reference>
<gene>
    <name type="primary">Ca10</name>
    <name type="synonym">Car10</name>
</gene>
<keyword id="KW-1185">Reference proteome</keyword>
<organism>
    <name type="scientific">Mus musculus</name>
    <name type="common">Mouse</name>
    <dbReference type="NCBI Taxonomy" id="10090"/>
    <lineage>
        <taxon>Eukaryota</taxon>
        <taxon>Metazoa</taxon>
        <taxon>Chordata</taxon>
        <taxon>Craniata</taxon>
        <taxon>Vertebrata</taxon>
        <taxon>Euteleostomi</taxon>
        <taxon>Mammalia</taxon>
        <taxon>Eutheria</taxon>
        <taxon>Euarchontoglires</taxon>
        <taxon>Glires</taxon>
        <taxon>Rodentia</taxon>
        <taxon>Myomorpha</taxon>
        <taxon>Muroidea</taxon>
        <taxon>Muridae</taxon>
        <taxon>Murinae</taxon>
        <taxon>Mus</taxon>
        <taxon>Mus</taxon>
    </lineage>
</organism>